<accession>Q22004</accession>
<reference key="1">
    <citation type="journal article" date="1998" name="Science">
        <title>Genome sequence of the nematode C. elegans: a platform for investigating biology.</title>
        <authorList>
            <consortium name="The C. elegans sequencing consortium"/>
        </authorList>
    </citation>
    <scope>NUCLEOTIDE SEQUENCE [LARGE SCALE GENOMIC DNA]</scope>
    <source>
        <strain>Bristol N2</strain>
    </source>
</reference>
<evidence type="ECO:0000255" key="1">
    <source>
        <dbReference type="PROSITE-ProRule" id="PRU00467"/>
    </source>
</evidence>
<dbReference type="EMBL" id="Z50795">
    <property type="protein sequence ID" value="CAA90664.1"/>
    <property type="molecule type" value="Genomic_DNA"/>
</dbReference>
<dbReference type="PIR" id="T24229">
    <property type="entry name" value="T24229"/>
</dbReference>
<dbReference type="RefSeq" id="NP_496270.1">
    <property type="nucleotide sequence ID" value="NM_063869.7"/>
</dbReference>
<dbReference type="SMR" id="Q22004"/>
<dbReference type="BioGRID" id="39937">
    <property type="interactions" value="6"/>
</dbReference>
<dbReference type="FunCoup" id="Q22004">
    <property type="interactions" value="2965"/>
</dbReference>
<dbReference type="STRING" id="6239.R166.3.1"/>
<dbReference type="PaxDb" id="6239-R166.3"/>
<dbReference type="PeptideAtlas" id="Q22004"/>
<dbReference type="EnsemblMetazoa" id="R166.3.1">
    <property type="protein sequence ID" value="R166.3.1"/>
    <property type="gene ID" value="WBGene00011303"/>
</dbReference>
<dbReference type="GeneID" id="174621"/>
<dbReference type="KEGG" id="cel:CELE_R166.3"/>
<dbReference type="UCSC" id="R166.3">
    <property type="organism name" value="c. elegans"/>
</dbReference>
<dbReference type="AGR" id="WB:WBGene00011303"/>
<dbReference type="CTD" id="174621"/>
<dbReference type="WormBase" id="R166.3">
    <property type="protein sequence ID" value="CE03582"/>
    <property type="gene ID" value="WBGene00011303"/>
</dbReference>
<dbReference type="eggNOG" id="KOG3274">
    <property type="taxonomic scope" value="Eukaryota"/>
</dbReference>
<dbReference type="GeneTree" id="ENSGT00390000010397"/>
<dbReference type="HOGENOM" id="CLU_052828_1_0_1"/>
<dbReference type="InParanoid" id="Q22004"/>
<dbReference type="OMA" id="LFITWNK"/>
<dbReference type="OrthoDB" id="24630at2759"/>
<dbReference type="PhylomeDB" id="Q22004"/>
<dbReference type="PRO" id="PR:Q22004"/>
<dbReference type="Proteomes" id="UP000001940">
    <property type="component" value="Chromosome II"/>
</dbReference>
<dbReference type="Bgee" id="WBGene00011303">
    <property type="expression patterns" value="Expressed in pharyngeal muscle cell (C elegans) and 4 other cell types or tissues"/>
</dbReference>
<dbReference type="Gene3D" id="3.30.700.20">
    <property type="entry name" value="Hypothetical protein ph0010, domain 1"/>
    <property type="match status" value="1"/>
</dbReference>
<dbReference type="InterPro" id="IPR023473">
    <property type="entry name" value="AMMECR1"/>
</dbReference>
<dbReference type="InterPro" id="IPR036071">
    <property type="entry name" value="AMMECR1_dom_sf"/>
</dbReference>
<dbReference type="InterPro" id="IPR002733">
    <property type="entry name" value="AMMECR1_domain"/>
</dbReference>
<dbReference type="InterPro" id="IPR027485">
    <property type="entry name" value="AMMECR1_N"/>
</dbReference>
<dbReference type="NCBIfam" id="TIGR00296">
    <property type="entry name" value="TIGR00296 family protein"/>
    <property type="match status" value="1"/>
</dbReference>
<dbReference type="PANTHER" id="PTHR13016:SF0">
    <property type="entry name" value="AMME SYNDROME CANDIDATE GENE 1 PROTEIN"/>
    <property type="match status" value="1"/>
</dbReference>
<dbReference type="PANTHER" id="PTHR13016">
    <property type="entry name" value="AMMECR1 HOMOLOG"/>
    <property type="match status" value="1"/>
</dbReference>
<dbReference type="Pfam" id="PF01871">
    <property type="entry name" value="AMMECR1"/>
    <property type="match status" value="1"/>
</dbReference>
<dbReference type="SUPFAM" id="SSF143447">
    <property type="entry name" value="AMMECR1-like"/>
    <property type="match status" value="1"/>
</dbReference>
<dbReference type="PROSITE" id="PS51112">
    <property type="entry name" value="AMMECR1"/>
    <property type="match status" value="1"/>
</dbReference>
<organism>
    <name type="scientific">Caenorhabditis elegans</name>
    <dbReference type="NCBI Taxonomy" id="6239"/>
    <lineage>
        <taxon>Eukaryota</taxon>
        <taxon>Metazoa</taxon>
        <taxon>Ecdysozoa</taxon>
        <taxon>Nematoda</taxon>
        <taxon>Chromadorea</taxon>
        <taxon>Rhabditida</taxon>
        <taxon>Rhabditina</taxon>
        <taxon>Rhabditomorpha</taxon>
        <taxon>Rhabditoidea</taxon>
        <taxon>Rhabditidae</taxon>
        <taxon>Peloderinae</taxon>
        <taxon>Caenorhabditis</taxon>
    </lineage>
</organism>
<name>AMERL_CAEEL</name>
<sequence length="200" mass="22963">MTSANIQMAVYCFDVINAQLNREKEPPVPKEIPNVKLPLFVTWKKGHQHDLRGCIGTFSDLRLGEGLNEYAKTSAFHDSRFKPISREEVPSLQCGVSLLINFEPIHNFRDWTIGRHGVRMNFDDGHRNRSAVFLPEVAQEQGWNHVETIDHLIRKSGYGGHINDALRSALRIVRFQSSKLVLDYKDYVNYKQSHGLPLPR</sequence>
<gene>
    <name type="ORF">R166.3</name>
</gene>
<feature type="chain" id="PRO_0000142368" description="Uncharacterized protein R166.3">
    <location>
        <begin position="1"/>
        <end position="200"/>
    </location>
</feature>
<feature type="domain" description="AMMECR1" evidence="1">
    <location>
        <begin position="1"/>
        <end position="191"/>
    </location>
</feature>
<protein>
    <recommendedName>
        <fullName>Uncharacterized protein R166.3</fullName>
    </recommendedName>
</protein>
<proteinExistence type="predicted"/>
<keyword id="KW-1185">Reference proteome</keyword>